<evidence type="ECO:0000255" key="1">
    <source>
        <dbReference type="HAMAP-Rule" id="MF_00249"/>
    </source>
</evidence>
<proteinExistence type="inferred from homology"/>
<sequence>MSEMTPREIVSELDSHIIGQDKAKRAVAIALRNRWRRMQLNEELRHEVTPKNILMIGPTGVGKTEIARRLAKLANAPFIKVEATKFTEVGYVGKEVDSIIRDLTDAAVKMVRHQSIEKMRYRAEELAEERILDVLIPPAKNNWGVPDESQEPSATRQTFRKKLREGQLDDKEIEIDLAAAPMGVEIMAPPGMEEMTNQLQSMFQNIAGQKQKPRKIKIKEALKLLIEEEAAKLVNPEELKQQAIDAVEQHGIVFIDEIDKICKRGQTSGPDVSREGVQRDLLPLVEGCTVSTKHGMVKTDHILFIASGAFQVSSPSDLIPELQGRLPIRVELQALTTDDFERILTEPSASLTEQYKALMATEGVTIEFTREGIRKIAEAAWQVNERTENIGARRLHTVLERLMEDISYDASESSGQSITIDAEYVGKHLDELVADEDLSRFIL</sequence>
<gene>
    <name evidence="1" type="primary">hslU</name>
    <name type="ordered locus">YPTS_0099</name>
</gene>
<feature type="chain" id="PRO_1000100985" description="ATP-dependent protease ATPase subunit HslU">
    <location>
        <begin position="1"/>
        <end position="443"/>
    </location>
</feature>
<feature type="binding site" evidence="1">
    <location>
        <position position="18"/>
    </location>
    <ligand>
        <name>ATP</name>
        <dbReference type="ChEBI" id="CHEBI:30616"/>
    </ligand>
</feature>
<feature type="binding site" evidence="1">
    <location>
        <begin position="60"/>
        <end position="65"/>
    </location>
    <ligand>
        <name>ATP</name>
        <dbReference type="ChEBI" id="CHEBI:30616"/>
    </ligand>
</feature>
<feature type="binding site" evidence="1">
    <location>
        <position position="256"/>
    </location>
    <ligand>
        <name>ATP</name>
        <dbReference type="ChEBI" id="CHEBI:30616"/>
    </ligand>
</feature>
<feature type="binding site" evidence="1">
    <location>
        <position position="321"/>
    </location>
    <ligand>
        <name>ATP</name>
        <dbReference type="ChEBI" id="CHEBI:30616"/>
    </ligand>
</feature>
<feature type="binding site" evidence="1">
    <location>
        <position position="393"/>
    </location>
    <ligand>
        <name>ATP</name>
        <dbReference type="ChEBI" id="CHEBI:30616"/>
    </ligand>
</feature>
<accession>B2JZC5</accession>
<reference key="1">
    <citation type="submission" date="2008-04" db="EMBL/GenBank/DDBJ databases">
        <title>Complete sequence of Yersinia pseudotuberculosis PB1/+.</title>
        <authorList>
            <person name="Copeland A."/>
            <person name="Lucas S."/>
            <person name="Lapidus A."/>
            <person name="Glavina del Rio T."/>
            <person name="Dalin E."/>
            <person name="Tice H."/>
            <person name="Bruce D."/>
            <person name="Goodwin L."/>
            <person name="Pitluck S."/>
            <person name="Munk A.C."/>
            <person name="Brettin T."/>
            <person name="Detter J.C."/>
            <person name="Han C."/>
            <person name="Tapia R."/>
            <person name="Schmutz J."/>
            <person name="Larimer F."/>
            <person name="Land M."/>
            <person name="Hauser L."/>
            <person name="Challacombe J.F."/>
            <person name="Green L."/>
            <person name="Lindler L.E."/>
            <person name="Nikolich M.P."/>
            <person name="Richardson P."/>
        </authorList>
    </citation>
    <scope>NUCLEOTIDE SEQUENCE [LARGE SCALE GENOMIC DNA]</scope>
    <source>
        <strain>PB1/+</strain>
    </source>
</reference>
<keyword id="KW-0067">ATP-binding</keyword>
<keyword id="KW-0143">Chaperone</keyword>
<keyword id="KW-0963">Cytoplasm</keyword>
<keyword id="KW-0547">Nucleotide-binding</keyword>
<keyword id="KW-0346">Stress response</keyword>
<comment type="function">
    <text evidence="1">ATPase subunit of a proteasome-like degradation complex; this subunit has chaperone activity. The binding of ATP and its subsequent hydrolysis by HslU are essential for unfolding of protein substrates subsequently hydrolyzed by HslV. HslU recognizes the N-terminal part of its protein substrates and unfolds these before they are guided to HslV for hydrolysis.</text>
</comment>
<comment type="subunit">
    <text evidence="1">A double ring-shaped homohexamer of HslV is capped on each side by a ring-shaped HslU homohexamer. The assembly of the HslU/HslV complex is dependent on binding of ATP.</text>
</comment>
<comment type="subcellular location">
    <subcellularLocation>
        <location evidence="1">Cytoplasm</location>
    </subcellularLocation>
</comment>
<comment type="similarity">
    <text evidence="1">Belongs to the ClpX chaperone family. HslU subfamily.</text>
</comment>
<name>HSLU_YERPB</name>
<dbReference type="EMBL" id="CP001048">
    <property type="protein sequence ID" value="ACC87098.1"/>
    <property type="molecule type" value="Genomic_DNA"/>
</dbReference>
<dbReference type="RefSeq" id="WP_002208943.1">
    <property type="nucleotide sequence ID" value="NZ_CP009780.1"/>
</dbReference>
<dbReference type="SMR" id="B2JZC5"/>
<dbReference type="GeneID" id="96663576"/>
<dbReference type="KEGG" id="ypb:YPTS_0099"/>
<dbReference type="PATRIC" id="fig|502801.10.peg.3777"/>
<dbReference type="GO" id="GO:0009376">
    <property type="term" value="C:HslUV protease complex"/>
    <property type="evidence" value="ECO:0007669"/>
    <property type="project" value="UniProtKB-UniRule"/>
</dbReference>
<dbReference type="GO" id="GO:0005524">
    <property type="term" value="F:ATP binding"/>
    <property type="evidence" value="ECO:0007669"/>
    <property type="project" value="UniProtKB-UniRule"/>
</dbReference>
<dbReference type="GO" id="GO:0016887">
    <property type="term" value="F:ATP hydrolysis activity"/>
    <property type="evidence" value="ECO:0007669"/>
    <property type="project" value="InterPro"/>
</dbReference>
<dbReference type="GO" id="GO:0008233">
    <property type="term" value="F:peptidase activity"/>
    <property type="evidence" value="ECO:0007669"/>
    <property type="project" value="InterPro"/>
</dbReference>
<dbReference type="GO" id="GO:0036402">
    <property type="term" value="F:proteasome-activating activity"/>
    <property type="evidence" value="ECO:0007669"/>
    <property type="project" value="UniProtKB-UniRule"/>
</dbReference>
<dbReference type="GO" id="GO:0043335">
    <property type="term" value="P:protein unfolding"/>
    <property type="evidence" value="ECO:0007669"/>
    <property type="project" value="UniProtKB-UniRule"/>
</dbReference>
<dbReference type="GO" id="GO:0051603">
    <property type="term" value="P:proteolysis involved in protein catabolic process"/>
    <property type="evidence" value="ECO:0007669"/>
    <property type="project" value="TreeGrafter"/>
</dbReference>
<dbReference type="CDD" id="cd19498">
    <property type="entry name" value="RecA-like_HslU"/>
    <property type="match status" value="1"/>
</dbReference>
<dbReference type="FunFam" id="1.10.8.10:FF:000028">
    <property type="entry name" value="ATP-dependent protease ATPase subunit HslU"/>
    <property type="match status" value="2"/>
</dbReference>
<dbReference type="FunFam" id="1.10.8.60:FF:000027">
    <property type="entry name" value="ATP-dependent protease ATPase subunit HslU"/>
    <property type="match status" value="1"/>
</dbReference>
<dbReference type="FunFam" id="3.40.50.300:FF:000213">
    <property type="entry name" value="ATP-dependent protease ATPase subunit HslU"/>
    <property type="match status" value="1"/>
</dbReference>
<dbReference type="FunFam" id="3.40.50.300:FF:000220">
    <property type="entry name" value="ATP-dependent protease ATPase subunit HslU"/>
    <property type="match status" value="1"/>
</dbReference>
<dbReference type="Gene3D" id="1.10.8.60">
    <property type="match status" value="1"/>
</dbReference>
<dbReference type="Gene3D" id="1.10.8.10">
    <property type="entry name" value="DNA helicase RuvA subunit, C-terminal domain"/>
    <property type="match status" value="1"/>
</dbReference>
<dbReference type="Gene3D" id="3.40.50.300">
    <property type="entry name" value="P-loop containing nucleotide triphosphate hydrolases"/>
    <property type="match status" value="2"/>
</dbReference>
<dbReference type="HAMAP" id="MF_00249">
    <property type="entry name" value="HslU"/>
    <property type="match status" value="1"/>
</dbReference>
<dbReference type="InterPro" id="IPR003593">
    <property type="entry name" value="AAA+_ATPase"/>
</dbReference>
<dbReference type="InterPro" id="IPR050052">
    <property type="entry name" value="ATP-dep_Clp_protease_ClpX"/>
</dbReference>
<dbReference type="InterPro" id="IPR003959">
    <property type="entry name" value="ATPase_AAA_core"/>
</dbReference>
<dbReference type="InterPro" id="IPR019489">
    <property type="entry name" value="Clp_ATPase_C"/>
</dbReference>
<dbReference type="InterPro" id="IPR004491">
    <property type="entry name" value="HslU"/>
</dbReference>
<dbReference type="InterPro" id="IPR027417">
    <property type="entry name" value="P-loop_NTPase"/>
</dbReference>
<dbReference type="NCBIfam" id="TIGR00390">
    <property type="entry name" value="hslU"/>
    <property type="match status" value="1"/>
</dbReference>
<dbReference type="NCBIfam" id="NF003544">
    <property type="entry name" value="PRK05201.1"/>
    <property type="match status" value="1"/>
</dbReference>
<dbReference type="PANTHER" id="PTHR48102">
    <property type="entry name" value="ATP-DEPENDENT CLP PROTEASE ATP-BINDING SUBUNIT CLPX-LIKE, MITOCHONDRIAL-RELATED"/>
    <property type="match status" value="1"/>
</dbReference>
<dbReference type="PANTHER" id="PTHR48102:SF3">
    <property type="entry name" value="ATP-DEPENDENT PROTEASE ATPASE SUBUNIT HSLU"/>
    <property type="match status" value="1"/>
</dbReference>
<dbReference type="Pfam" id="PF00004">
    <property type="entry name" value="AAA"/>
    <property type="match status" value="1"/>
</dbReference>
<dbReference type="Pfam" id="PF07724">
    <property type="entry name" value="AAA_2"/>
    <property type="match status" value="1"/>
</dbReference>
<dbReference type="SMART" id="SM00382">
    <property type="entry name" value="AAA"/>
    <property type="match status" value="1"/>
</dbReference>
<dbReference type="SMART" id="SM01086">
    <property type="entry name" value="ClpB_D2-small"/>
    <property type="match status" value="1"/>
</dbReference>
<dbReference type="SUPFAM" id="SSF52540">
    <property type="entry name" value="P-loop containing nucleoside triphosphate hydrolases"/>
    <property type="match status" value="1"/>
</dbReference>
<protein>
    <recommendedName>
        <fullName evidence="1">ATP-dependent protease ATPase subunit HslU</fullName>
    </recommendedName>
    <alternativeName>
        <fullName evidence="1">Unfoldase HslU</fullName>
    </alternativeName>
</protein>
<organism>
    <name type="scientific">Yersinia pseudotuberculosis serotype IB (strain PB1/+)</name>
    <dbReference type="NCBI Taxonomy" id="502801"/>
    <lineage>
        <taxon>Bacteria</taxon>
        <taxon>Pseudomonadati</taxon>
        <taxon>Pseudomonadota</taxon>
        <taxon>Gammaproteobacteria</taxon>
        <taxon>Enterobacterales</taxon>
        <taxon>Yersiniaceae</taxon>
        <taxon>Yersinia</taxon>
    </lineage>
</organism>